<accession>G2TRM1</accession>
<name>YI7I_SCHPO</name>
<sequence>MFYLRVLCVQRRLVREINKLSSFESNWLFLLFLVRVCRQLKTVTVLIVPVLPVYTNKVLRCSQCDWHEPANLDSIYQRSSHDDDLPTIKGSDASTQQYERKTYITDASPESQNLFLSKSKEEGVIFLCIQVSF</sequence>
<organism>
    <name type="scientific">Schizosaccharomyces pombe (strain 972 / ATCC 24843)</name>
    <name type="common">Fission yeast</name>
    <dbReference type="NCBI Taxonomy" id="284812"/>
    <lineage>
        <taxon>Eukaryota</taxon>
        <taxon>Fungi</taxon>
        <taxon>Dikarya</taxon>
        <taxon>Ascomycota</taxon>
        <taxon>Taphrinomycotina</taxon>
        <taxon>Schizosaccharomycetes</taxon>
        <taxon>Schizosaccharomycetales</taxon>
        <taxon>Schizosaccharomycetaceae</taxon>
        <taxon>Schizosaccharomyces</taxon>
    </lineage>
</organism>
<comment type="similarity">
    <text evidence="1">Belongs to the UPF0768 family.</text>
</comment>
<reference key="1">
    <citation type="journal article" date="2002" name="Nature">
        <title>The genome sequence of Schizosaccharomyces pombe.</title>
        <authorList>
            <person name="Wood V."/>
            <person name="Gwilliam R."/>
            <person name="Rajandream M.A."/>
            <person name="Lyne M.H."/>
            <person name="Lyne R."/>
            <person name="Stewart A."/>
            <person name="Sgouros J.G."/>
            <person name="Peat N."/>
            <person name="Hayles J."/>
            <person name="Baker S.G."/>
            <person name="Basham D."/>
            <person name="Bowman S."/>
            <person name="Brooks K."/>
            <person name="Brown D."/>
            <person name="Brown S."/>
            <person name="Chillingworth T."/>
            <person name="Churcher C.M."/>
            <person name="Collins M."/>
            <person name="Connor R."/>
            <person name="Cronin A."/>
            <person name="Davis P."/>
            <person name="Feltwell T."/>
            <person name="Fraser A."/>
            <person name="Gentles S."/>
            <person name="Goble A."/>
            <person name="Hamlin N."/>
            <person name="Harris D.E."/>
            <person name="Hidalgo J."/>
            <person name="Hodgson G."/>
            <person name="Holroyd S."/>
            <person name="Hornsby T."/>
            <person name="Howarth S."/>
            <person name="Huckle E.J."/>
            <person name="Hunt S."/>
            <person name="Jagels K."/>
            <person name="James K.D."/>
            <person name="Jones L."/>
            <person name="Jones M."/>
            <person name="Leather S."/>
            <person name="McDonald S."/>
            <person name="McLean J."/>
            <person name="Mooney P."/>
            <person name="Moule S."/>
            <person name="Mungall K.L."/>
            <person name="Murphy L.D."/>
            <person name="Niblett D."/>
            <person name="Odell C."/>
            <person name="Oliver K."/>
            <person name="O'Neil S."/>
            <person name="Pearson D."/>
            <person name="Quail M.A."/>
            <person name="Rabbinowitsch E."/>
            <person name="Rutherford K.M."/>
            <person name="Rutter S."/>
            <person name="Saunders D."/>
            <person name="Seeger K."/>
            <person name="Sharp S."/>
            <person name="Skelton J."/>
            <person name="Simmonds M.N."/>
            <person name="Squares R."/>
            <person name="Squares S."/>
            <person name="Stevens K."/>
            <person name="Taylor K."/>
            <person name="Taylor R.G."/>
            <person name="Tivey A."/>
            <person name="Walsh S.V."/>
            <person name="Warren T."/>
            <person name="Whitehead S."/>
            <person name="Woodward J.R."/>
            <person name="Volckaert G."/>
            <person name="Aert R."/>
            <person name="Robben J."/>
            <person name="Grymonprez B."/>
            <person name="Weltjens I."/>
            <person name="Vanstreels E."/>
            <person name="Rieger M."/>
            <person name="Schaefer M."/>
            <person name="Mueller-Auer S."/>
            <person name="Gabel C."/>
            <person name="Fuchs M."/>
            <person name="Duesterhoeft A."/>
            <person name="Fritzc C."/>
            <person name="Holzer E."/>
            <person name="Moestl D."/>
            <person name="Hilbert H."/>
            <person name="Borzym K."/>
            <person name="Langer I."/>
            <person name="Beck A."/>
            <person name="Lehrach H."/>
            <person name="Reinhardt R."/>
            <person name="Pohl T.M."/>
            <person name="Eger P."/>
            <person name="Zimmermann W."/>
            <person name="Wedler H."/>
            <person name="Wambutt R."/>
            <person name="Purnelle B."/>
            <person name="Goffeau A."/>
            <person name="Cadieu E."/>
            <person name="Dreano S."/>
            <person name="Gloux S."/>
            <person name="Lelaure V."/>
            <person name="Mottier S."/>
            <person name="Galibert F."/>
            <person name="Aves S.J."/>
            <person name="Xiang Z."/>
            <person name="Hunt C."/>
            <person name="Moore K."/>
            <person name="Hurst S.M."/>
            <person name="Lucas M."/>
            <person name="Rochet M."/>
            <person name="Gaillardin C."/>
            <person name="Tallada V.A."/>
            <person name="Garzon A."/>
            <person name="Thode G."/>
            <person name="Daga R.R."/>
            <person name="Cruzado L."/>
            <person name="Jimenez J."/>
            <person name="Sanchez M."/>
            <person name="del Rey F."/>
            <person name="Benito J."/>
            <person name="Dominguez A."/>
            <person name="Revuelta J.L."/>
            <person name="Moreno S."/>
            <person name="Armstrong J."/>
            <person name="Forsburg S.L."/>
            <person name="Cerutti L."/>
            <person name="Lowe T."/>
            <person name="McCombie W.R."/>
            <person name="Paulsen I."/>
            <person name="Potashkin J."/>
            <person name="Shpakovski G.V."/>
            <person name="Ussery D."/>
            <person name="Barrell B.G."/>
            <person name="Nurse P."/>
        </authorList>
    </citation>
    <scope>NUCLEOTIDE SEQUENCE [LARGE SCALE GENOMIC DNA]</scope>
    <source>
        <strain>972 / ATCC 24843</strain>
    </source>
</reference>
<reference key="2">
    <citation type="journal article" date="2011" name="Science">
        <title>Comparative functional genomics of the fission yeasts.</title>
        <authorList>
            <person name="Rhind N."/>
            <person name="Chen Z."/>
            <person name="Yassour M."/>
            <person name="Thompson D.A."/>
            <person name="Haas B.J."/>
            <person name="Habib N."/>
            <person name="Wapinski I."/>
            <person name="Roy S."/>
            <person name="Lin M.F."/>
            <person name="Heiman D.I."/>
            <person name="Young S.K."/>
            <person name="Furuya K."/>
            <person name="Guo Y."/>
            <person name="Pidoux A."/>
            <person name="Chen H.M."/>
            <person name="Robbertse B."/>
            <person name="Goldberg J.M."/>
            <person name="Aoki K."/>
            <person name="Bayne E.H."/>
            <person name="Berlin A.M."/>
            <person name="Desjardins C.A."/>
            <person name="Dobbs E."/>
            <person name="Dukaj L."/>
            <person name="Fan L."/>
            <person name="FitzGerald M.G."/>
            <person name="French C."/>
            <person name="Gujja S."/>
            <person name="Hansen K."/>
            <person name="Keifenheim D."/>
            <person name="Levin J.Z."/>
            <person name="Mosher R.A."/>
            <person name="Mueller C.A."/>
            <person name="Pfiffner J."/>
            <person name="Priest M."/>
            <person name="Russ C."/>
            <person name="Smialowska A."/>
            <person name="Swoboda P."/>
            <person name="Sykes S.M."/>
            <person name="Vaughn M."/>
            <person name="Vengrova S."/>
            <person name="Yoder R."/>
            <person name="Zeng Q."/>
            <person name="Allshire R."/>
            <person name="Baulcombe D."/>
            <person name="Birren B.W."/>
            <person name="Brown W."/>
            <person name="Ekwall K."/>
            <person name="Kellis M."/>
            <person name="Leatherwood J."/>
            <person name="Levin H."/>
            <person name="Margalit H."/>
            <person name="Martienssen R."/>
            <person name="Nieduszynski C.A."/>
            <person name="Spatafora J.W."/>
            <person name="Friedman N."/>
            <person name="Dalgaard J.Z."/>
            <person name="Baumann P."/>
            <person name="Niki H."/>
            <person name="Regev A."/>
            <person name="Nusbaum C."/>
        </authorList>
    </citation>
    <scope>IDENTIFICATION</scope>
</reference>
<proteinExistence type="inferred from homology"/>
<evidence type="ECO:0000305" key="1"/>
<protein>
    <recommendedName>
        <fullName>UPF0768 protein C977.18</fullName>
    </recommendedName>
</protein>
<feature type="chain" id="PRO_0000416684" description="UPF0768 protein C977.18">
    <location>
        <begin position="1"/>
        <end position="133"/>
    </location>
</feature>
<gene>
    <name type="ORF">SPAC977.18</name>
</gene>
<keyword id="KW-1185">Reference proteome</keyword>
<dbReference type="EMBL" id="CU329670">
    <property type="protein sequence ID" value="CCD31307.1"/>
    <property type="molecule type" value="Genomic_DNA"/>
</dbReference>
<dbReference type="RefSeq" id="XP_004001759.1">
    <property type="nucleotide sequence ID" value="XM_004001710.1"/>
</dbReference>
<dbReference type="PaxDb" id="4896-SPAC977.18.1"/>
<dbReference type="EnsemblFungi" id="SPAC977.18.1">
    <property type="protein sequence ID" value="SPAC977.18.1:pep"/>
    <property type="gene ID" value="SPAC977.18"/>
</dbReference>
<dbReference type="PomBase" id="SPAC977.18"/>
<dbReference type="VEuPathDB" id="FungiDB:SPAC977.18"/>
<dbReference type="HOGENOM" id="CLU_1907896_0_0_1"/>
<dbReference type="InParanoid" id="G2TRM1"/>
<dbReference type="PRO" id="PR:G2TRM1"/>
<dbReference type="Proteomes" id="UP000002485">
    <property type="component" value="Chromosome I"/>
</dbReference>
<dbReference type="GO" id="GO:0005886">
    <property type="term" value="C:plasma membrane"/>
    <property type="evidence" value="ECO:0000266"/>
    <property type="project" value="PomBase"/>
</dbReference>
<dbReference type="PANTHER" id="PTHR28139">
    <property type="entry name" value="UPF0768 PROTEIN YBL029C-A"/>
    <property type="match status" value="1"/>
</dbReference>
<dbReference type="PANTHER" id="PTHR28139:SF1">
    <property type="entry name" value="UPF0768 PROTEIN YBL029C-A"/>
    <property type="match status" value="1"/>
</dbReference>